<feature type="chain" id="PRO_0000144861" description="Putative HTH-type transcriptional regulatory protein PAE1627">
    <location>
        <begin position="1"/>
        <end position="250"/>
    </location>
</feature>
<feature type="domain" description="HTH cro/C1-type" evidence="1">
    <location>
        <begin position="129"/>
        <end position="183"/>
    </location>
</feature>
<feature type="DNA-binding region" description="H-T-H motif" evidence="1">
    <location>
        <begin position="140"/>
        <end position="159"/>
    </location>
</feature>
<name>Y1627_PYRAE</name>
<evidence type="ECO:0000255" key="1">
    <source>
        <dbReference type="HAMAP-Rule" id="MF_00584"/>
    </source>
</evidence>
<dbReference type="EMBL" id="AE009441">
    <property type="protein sequence ID" value="AAL63613.1"/>
    <property type="molecule type" value="Genomic_DNA"/>
</dbReference>
<dbReference type="RefSeq" id="WP_011008086.1">
    <property type="nucleotide sequence ID" value="NC_003364.1"/>
</dbReference>
<dbReference type="SMR" id="Q8ZWT6"/>
<dbReference type="FunCoup" id="Q8ZWT6">
    <property type="interactions" value="1"/>
</dbReference>
<dbReference type="STRING" id="178306.PAE1627"/>
<dbReference type="EnsemblBacteria" id="AAL63613">
    <property type="protein sequence ID" value="AAL63613"/>
    <property type="gene ID" value="PAE1627"/>
</dbReference>
<dbReference type="GeneID" id="1465862"/>
<dbReference type="KEGG" id="pai:PAE1627"/>
<dbReference type="PATRIC" id="fig|178306.9.peg.1202"/>
<dbReference type="eggNOG" id="arCOG04152">
    <property type="taxonomic scope" value="Archaea"/>
</dbReference>
<dbReference type="HOGENOM" id="CLU_1113915_0_0_2"/>
<dbReference type="InParanoid" id="Q8ZWT6"/>
<dbReference type="Proteomes" id="UP000002439">
    <property type="component" value="Chromosome"/>
</dbReference>
<dbReference type="GO" id="GO:0003677">
    <property type="term" value="F:DNA binding"/>
    <property type="evidence" value="ECO:0007669"/>
    <property type="project" value="UniProtKB-KW"/>
</dbReference>
<dbReference type="GO" id="GO:0003700">
    <property type="term" value="F:DNA-binding transcription factor activity"/>
    <property type="evidence" value="ECO:0007669"/>
    <property type="project" value="UniProtKB-UniRule"/>
</dbReference>
<dbReference type="CDD" id="cd00093">
    <property type="entry name" value="HTH_XRE"/>
    <property type="match status" value="1"/>
</dbReference>
<dbReference type="Gene3D" id="1.10.260.40">
    <property type="entry name" value="lambda repressor-like DNA-binding domains"/>
    <property type="match status" value="1"/>
</dbReference>
<dbReference type="HAMAP" id="MF_00584">
    <property type="entry name" value="HTH_type_cro_C1"/>
    <property type="match status" value="1"/>
</dbReference>
<dbReference type="InterPro" id="IPR020886">
    <property type="entry name" value="Arc_TR_HTH"/>
</dbReference>
<dbReference type="InterPro" id="IPR001387">
    <property type="entry name" value="Cro/C1-type_HTH"/>
</dbReference>
<dbReference type="InterPro" id="IPR010982">
    <property type="entry name" value="Lambda_DNA-bd_dom_sf"/>
</dbReference>
<dbReference type="Pfam" id="PF01381">
    <property type="entry name" value="HTH_3"/>
    <property type="match status" value="1"/>
</dbReference>
<dbReference type="SMART" id="SM00530">
    <property type="entry name" value="HTH_XRE"/>
    <property type="match status" value="1"/>
</dbReference>
<dbReference type="SUPFAM" id="SSF47413">
    <property type="entry name" value="lambda repressor-like DNA-binding domains"/>
    <property type="match status" value="1"/>
</dbReference>
<dbReference type="PROSITE" id="PS50943">
    <property type="entry name" value="HTH_CROC1"/>
    <property type="match status" value="1"/>
</dbReference>
<accession>Q8ZWT6</accession>
<reference key="1">
    <citation type="journal article" date="2002" name="Proc. Natl. Acad. Sci. U.S.A.">
        <title>Genome sequence of the hyperthermophilic crenarchaeon Pyrobaculum aerophilum.</title>
        <authorList>
            <person name="Fitz-Gibbon S.T."/>
            <person name="Ladner H."/>
            <person name="Kim U.-J."/>
            <person name="Stetter K.O."/>
            <person name="Simon M.I."/>
            <person name="Miller J.H."/>
        </authorList>
    </citation>
    <scope>NUCLEOTIDE SEQUENCE [LARGE SCALE GENOMIC DNA]</scope>
    <source>
        <strain>ATCC 51768 / DSM 7523 / JCM 9630 / CIP 104966 / NBRC 100827 / IM2</strain>
    </source>
</reference>
<keyword id="KW-0238">DNA-binding</keyword>
<keyword id="KW-1185">Reference proteome</keyword>
<keyword id="KW-0804">Transcription</keyword>
<keyword id="KW-0805">Transcription regulation</keyword>
<protein>
    <recommendedName>
        <fullName evidence="1">Putative HTH-type transcriptional regulatory protein PAE1627</fullName>
    </recommendedName>
</protein>
<organism>
    <name type="scientific">Pyrobaculum aerophilum (strain ATCC 51768 / DSM 7523 / JCM 9630 / CIP 104966 / NBRC 100827 / IM2)</name>
    <dbReference type="NCBI Taxonomy" id="178306"/>
    <lineage>
        <taxon>Archaea</taxon>
        <taxon>Thermoproteota</taxon>
        <taxon>Thermoprotei</taxon>
        <taxon>Thermoproteales</taxon>
        <taxon>Thermoproteaceae</taxon>
        <taxon>Pyrobaculum</taxon>
    </lineage>
</organism>
<gene>
    <name type="ordered locus">PAE1627</name>
</gene>
<proteinExistence type="inferred from homology"/>
<sequence length="250" mass="27958">MVDKLLNATLNVVKNRGEQLFIDVARPYAYTLVAKFDRDKYIMRVATDAEQVSQSAIKDLKLLSIHTNAPSICVVSSVKGHLLQRGVVYLRDDVVFMSLATLTDVLEGKKPIFKLNRGVITASIDGEKLRAKRQQAGLSLGTLATNLGVTRETVYRYERGEIEAPLKIAEKLINMFGEDITKKIKINETPKVSQEELASRQIGAKTYRLLESHPDAIKWEDRTILISSNAERYQKTVELANALGAEVERA</sequence>